<organism>
    <name type="scientific">Pongo abelii</name>
    <name type="common">Sumatran orangutan</name>
    <name type="synonym">Pongo pygmaeus abelii</name>
    <dbReference type="NCBI Taxonomy" id="9601"/>
    <lineage>
        <taxon>Eukaryota</taxon>
        <taxon>Metazoa</taxon>
        <taxon>Chordata</taxon>
        <taxon>Craniata</taxon>
        <taxon>Vertebrata</taxon>
        <taxon>Euteleostomi</taxon>
        <taxon>Mammalia</taxon>
        <taxon>Eutheria</taxon>
        <taxon>Euarchontoglires</taxon>
        <taxon>Primates</taxon>
        <taxon>Haplorrhini</taxon>
        <taxon>Catarrhini</taxon>
        <taxon>Hominidae</taxon>
        <taxon>Pongo</taxon>
    </lineage>
</organism>
<name>S2544_PONAB</name>
<feature type="chain" id="PRO_0000253066" description="Solute carrier family 25 member 44">
    <location>
        <begin position="1"/>
        <end position="314"/>
    </location>
</feature>
<feature type="transmembrane region" description="Helical; Name=1" evidence="2">
    <location>
        <begin position="20"/>
        <end position="42"/>
    </location>
</feature>
<feature type="transmembrane region" description="Helical; Name=2" evidence="2">
    <location>
        <begin position="71"/>
        <end position="90"/>
    </location>
</feature>
<feature type="transmembrane region" description="Helical; Name=3" evidence="2">
    <location>
        <begin position="113"/>
        <end position="133"/>
    </location>
</feature>
<feature type="transmembrane region" description="Helical; Name=4" evidence="2">
    <location>
        <begin position="185"/>
        <end position="201"/>
    </location>
</feature>
<feature type="transmembrane region" description="Helical; Name=5" evidence="2">
    <location>
        <begin position="222"/>
        <end position="239"/>
    </location>
</feature>
<feature type="transmembrane region" description="Helical; Name=6" evidence="2">
    <location>
        <begin position="278"/>
        <end position="296"/>
    </location>
</feature>
<feature type="repeat" description="Solcar 1" evidence="3">
    <location>
        <begin position="18"/>
        <end position="100"/>
    </location>
</feature>
<feature type="repeat" description="Solcar 2" evidence="3">
    <location>
        <begin position="107"/>
        <end position="210"/>
    </location>
</feature>
<feature type="repeat" description="Solcar 3" evidence="3">
    <location>
        <begin position="220"/>
        <end position="302"/>
    </location>
</feature>
<feature type="sequence conflict" description="In Ref. 1; CAH90290." evidence="4" ref="1">
    <original>K</original>
    <variation>R</variation>
    <location>
        <position position="142"/>
    </location>
</feature>
<feature type="sequence conflict" description="In Ref. 1; CAH92133." evidence="4" ref="1">
    <original>E</original>
    <variation>G</variation>
    <location>
        <position position="209"/>
    </location>
</feature>
<protein>
    <recommendedName>
        <fullName>Solute carrier family 25 member 44</fullName>
    </recommendedName>
</protein>
<comment type="function">
    <text evidence="1">Mitochondrial solute transporter which transports branched-chain amino acid (BCAA; valine, leucine and isoleucine) into mitochondria in brown adipose tissue (BAT). BAT is involved in BCAA catabolism and actively utilizes BCAA in the mitochondria for thermogenesis.</text>
</comment>
<comment type="catalytic activity">
    <reaction evidence="1">
        <text>L-valine(in) = L-valine(out)</text>
        <dbReference type="Rhea" id="RHEA:29703"/>
        <dbReference type="ChEBI" id="CHEBI:57762"/>
    </reaction>
</comment>
<comment type="catalytic activity">
    <reaction evidence="1">
        <text>L-leucine(in) = L-leucine(out)</text>
        <dbReference type="Rhea" id="RHEA:73011"/>
        <dbReference type="ChEBI" id="CHEBI:57427"/>
    </reaction>
</comment>
<comment type="subcellular location">
    <subcellularLocation>
        <location evidence="1">Mitochondrion membrane</location>
        <topology evidence="2">Multi-pass membrane protein</topology>
    </subcellularLocation>
</comment>
<comment type="similarity">
    <text evidence="2">Belongs to the mitochondrial carrier (TC 2.A.29) family.</text>
</comment>
<gene>
    <name evidence="1" type="primary">SLC25A44</name>
</gene>
<dbReference type="EMBL" id="CR858050">
    <property type="protein sequence ID" value="CAH90290.1"/>
    <property type="molecule type" value="mRNA"/>
</dbReference>
<dbReference type="EMBL" id="CR859982">
    <property type="protein sequence ID" value="CAH92133.1"/>
    <property type="molecule type" value="mRNA"/>
</dbReference>
<dbReference type="RefSeq" id="NP_001125132.1">
    <property type="nucleotide sequence ID" value="NM_001131660.1"/>
</dbReference>
<dbReference type="RefSeq" id="XP_024100529.1">
    <property type="nucleotide sequence ID" value="XM_024244761.3"/>
</dbReference>
<dbReference type="SMR" id="Q5RD67"/>
<dbReference type="FunCoup" id="Q5RD67">
    <property type="interactions" value="2225"/>
</dbReference>
<dbReference type="STRING" id="9601.ENSPPYP00000000842"/>
<dbReference type="Ensembl" id="ENSPPYT00000000873.2">
    <property type="protein sequence ID" value="ENSPPYP00000000842.2"/>
    <property type="gene ID" value="ENSPPYG00000000726.3"/>
</dbReference>
<dbReference type="GeneID" id="100172017"/>
<dbReference type="KEGG" id="pon:100172017"/>
<dbReference type="CTD" id="9673"/>
<dbReference type="GeneTree" id="ENSGT00940000155399"/>
<dbReference type="InParanoid" id="Q5RD67"/>
<dbReference type="OMA" id="GPSGILM"/>
<dbReference type="OrthoDB" id="250329at2759"/>
<dbReference type="Proteomes" id="UP000001595">
    <property type="component" value="Chromosome 1"/>
</dbReference>
<dbReference type="GO" id="GO:0031966">
    <property type="term" value="C:mitochondrial membrane"/>
    <property type="evidence" value="ECO:0007669"/>
    <property type="project" value="UniProtKB-SubCell"/>
</dbReference>
<dbReference type="GO" id="GO:0005739">
    <property type="term" value="C:mitochondrion"/>
    <property type="evidence" value="ECO:0000250"/>
    <property type="project" value="UniProtKB"/>
</dbReference>
<dbReference type="GO" id="GO:0015658">
    <property type="term" value="F:branched-chain amino acid transmembrane transporter activity"/>
    <property type="evidence" value="ECO:0000250"/>
    <property type="project" value="UniProtKB"/>
</dbReference>
<dbReference type="GO" id="GO:0006865">
    <property type="term" value="P:amino acid transport"/>
    <property type="evidence" value="ECO:0007669"/>
    <property type="project" value="UniProtKB-KW"/>
</dbReference>
<dbReference type="GO" id="GO:0009083">
    <property type="term" value="P:branched-chain amino acid catabolic process"/>
    <property type="evidence" value="ECO:0000250"/>
    <property type="project" value="UniProtKB"/>
</dbReference>
<dbReference type="GO" id="GO:0015803">
    <property type="term" value="P:branched-chain amino acid transport"/>
    <property type="evidence" value="ECO:0000250"/>
    <property type="project" value="UniProtKB"/>
</dbReference>
<dbReference type="GO" id="GO:0120161">
    <property type="term" value="P:regulation of cold-induced thermogenesis"/>
    <property type="evidence" value="ECO:0000250"/>
    <property type="project" value="UniProtKB"/>
</dbReference>
<dbReference type="FunFam" id="1.50.40.10:FF:000033">
    <property type="entry name" value="Solute carrier family 25 member 44"/>
    <property type="match status" value="1"/>
</dbReference>
<dbReference type="FunFam" id="1.50.40.10:FF:000108">
    <property type="entry name" value="Solute carrier family 25 member 44"/>
    <property type="match status" value="1"/>
</dbReference>
<dbReference type="Gene3D" id="1.50.40.10">
    <property type="entry name" value="Mitochondrial carrier domain"/>
    <property type="match status" value="2"/>
</dbReference>
<dbReference type="InterPro" id="IPR002067">
    <property type="entry name" value="Mit_carrier"/>
</dbReference>
<dbReference type="InterPro" id="IPR018108">
    <property type="entry name" value="Mitochondrial_sb/sol_carrier"/>
</dbReference>
<dbReference type="InterPro" id="IPR023395">
    <property type="entry name" value="Mt_carrier_dom_sf"/>
</dbReference>
<dbReference type="InterPro" id="IPR042164">
    <property type="entry name" value="SLC25A44"/>
</dbReference>
<dbReference type="PANTHER" id="PTHR46314">
    <property type="entry name" value="SOLUTE CARRIER FAMILY 25 MEMBER 44"/>
    <property type="match status" value="1"/>
</dbReference>
<dbReference type="PANTHER" id="PTHR46314:SF2">
    <property type="entry name" value="SOLUTE CARRIER FAMILY 25 MEMBER 44"/>
    <property type="match status" value="1"/>
</dbReference>
<dbReference type="Pfam" id="PF00153">
    <property type="entry name" value="Mito_carr"/>
    <property type="match status" value="3"/>
</dbReference>
<dbReference type="PRINTS" id="PR00926">
    <property type="entry name" value="MITOCARRIER"/>
</dbReference>
<dbReference type="SUPFAM" id="SSF103506">
    <property type="entry name" value="Mitochondrial carrier"/>
    <property type="match status" value="1"/>
</dbReference>
<dbReference type="PROSITE" id="PS50920">
    <property type="entry name" value="SOLCAR"/>
    <property type="match status" value="3"/>
</dbReference>
<reference key="1">
    <citation type="submission" date="2004-11" db="EMBL/GenBank/DDBJ databases">
        <authorList>
            <consortium name="The German cDNA consortium"/>
        </authorList>
    </citation>
    <scope>NUCLEOTIDE SEQUENCE [LARGE SCALE MRNA]</scope>
    <source>
        <tissue>Brain cortex</tissue>
    </source>
</reference>
<proteinExistence type="evidence at transcript level"/>
<keyword id="KW-0029">Amino-acid transport</keyword>
<keyword id="KW-0472">Membrane</keyword>
<keyword id="KW-0496">Mitochondrion</keyword>
<keyword id="KW-1185">Reference proteome</keyword>
<keyword id="KW-0677">Repeat</keyword>
<keyword id="KW-0812">Transmembrane</keyword>
<keyword id="KW-1133">Transmembrane helix</keyword>
<keyword id="KW-0813">Transport</keyword>
<evidence type="ECO:0000250" key="1">
    <source>
        <dbReference type="UniProtKB" id="Q8BGF9"/>
    </source>
</evidence>
<evidence type="ECO:0000255" key="2"/>
<evidence type="ECO:0000255" key="3">
    <source>
        <dbReference type="PROSITE-ProRule" id="PRU00282"/>
    </source>
</evidence>
<evidence type="ECO:0000305" key="4"/>
<accession>Q5RD67</accession>
<accession>Q5R7X7</accession>
<sequence length="314" mass="35420">MEDKRNIQIIEWEHLDKKKFYVFGVAMTMMIRVSVYPFTLIRTRLQVQKGKSLYHGTFDAFIKILRADGITGLYRGFLVNTFTLISGQCYVTTYELTRKFVADYSQSNTVKSLVAGGSASLVAQSITVPIDVVSQHLMMQRKGEKMGRFQVRGNPEGQGVVAFGQTKDIIRQILRADGLRGFYRGYVASLLTYIPNSAVWWPFYHFYAEQLSYLCPKECPHIVFQAVSGPLAAATASILTNPMDVIRTRVQVEGKNSIILTFRQLMAEEGPWGLMKGLSARIISATPSTIVIVVGYESLKKLSLRPELVDSRHW</sequence>